<reference key="1">
    <citation type="journal article" date="2005" name="Nat. Biotechnol.">
        <title>Complete genome sequence of the plant commensal Pseudomonas fluorescens Pf-5.</title>
        <authorList>
            <person name="Paulsen I.T."/>
            <person name="Press C.M."/>
            <person name="Ravel J."/>
            <person name="Kobayashi D.Y."/>
            <person name="Myers G.S.A."/>
            <person name="Mavrodi D.V."/>
            <person name="DeBoy R.T."/>
            <person name="Seshadri R."/>
            <person name="Ren Q."/>
            <person name="Madupu R."/>
            <person name="Dodson R.J."/>
            <person name="Durkin A.S."/>
            <person name="Brinkac L.M."/>
            <person name="Daugherty S.C."/>
            <person name="Sullivan S.A."/>
            <person name="Rosovitz M.J."/>
            <person name="Gwinn M.L."/>
            <person name="Zhou L."/>
            <person name="Schneider D.J."/>
            <person name="Cartinhour S.W."/>
            <person name="Nelson W.C."/>
            <person name="Weidman J."/>
            <person name="Watkins K."/>
            <person name="Tran K."/>
            <person name="Khouri H."/>
            <person name="Pierson E.A."/>
            <person name="Pierson L.S. III"/>
            <person name="Thomashow L.S."/>
            <person name="Loper J.E."/>
        </authorList>
    </citation>
    <scope>NUCLEOTIDE SEQUENCE [LARGE SCALE GENOMIC DNA]</scope>
    <source>
        <strain>ATCC BAA-477 / NRRL B-23932 / Pf-5</strain>
    </source>
</reference>
<evidence type="ECO:0000255" key="1">
    <source>
        <dbReference type="HAMAP-Rule" id="MF_01165"/>
    </source>
</evidence>
<evidence type="ECO:0000256" key="2">
    <source>
        <dbReference type="SAM" id="MobiDB-lite"/>
    </source>
</evidence>
<dbReference type="EC" id="2.4.2.43" evidence="1"/>
<dbReference type="EMBL" id="CP000076">
    <property type="protein sequence ID" value="AAY93712.1"/>
    <property type="molecule type" value="Genomic_DNA"/>
</dbReference>
<dbReference type="RefSeq" id="WP_011062724.1">
    <property type="nucleotide sequence ID" value="NC_004129.6"/>
</dbReference>
<dbReference type="SMR" id="Q4K884"/>
<dbReference type="STRING" id="220664.PFL_4461"/>
<dbReference type="CAZy" id="GT83">
    <property type="family name" value="Glycosyltransferase Family 83"/>
</dbReference>
<dbReference type="KEGG" id="pfl:PFL_4461"/>
<dbReference type="PATRIC" id="fig|220664.5.peg.4566"/>
<dbReference type="eggNOG" id="COG1807">
    <property type="taxonomic scope" value="Bacteria"/>
</dbReference>
<dbReference type="HOGENOM" id="CLU_019200_2_1_6"/>
<dbReference type="UniPathway" id="UPA00037"/>
<dbReference type="Proteomes" id="UP000008540">
    <property type="component" value="Chromosome"/>
</dbReference>
<dbReference type="GO" id="GO:0005886">
    <property type="term" value="C:plasma membrane"/>
    <property type="evidence" value="ECO:0007669"/>
    <property type="project" value="UniProtKB-SubCell"/>
</dbReference>
<dbReference type="GO" id="GO:0103015">
    <property type="term" value="F:4-amino-4-deoxy-L-arabinose transferase activity"/>
    <property type="evidence" value="ECO:0007669"/>
    <property type="project" value="UniProtKB-EC"/>
</dbReference>
<dbReference type="GO" id="GO:0000030">
    <property type="term" value="F:mannosyltransferase activity"/>
    <property type="evidence" value="ECO:0007669"/>
    <property type="project" value="InterPro"/>
</dbReference>
<dbReference type="GO" id="GO:0009245">
    <property type="term" value="P:lipid A biosynthetic process"/>
    <property type="evidence" value="ECO:0007669"/>
    <property type="project" value="UniProtKB-UniRule"/>
</dbReference>
<dbReference type="GO" id="GO:0009103">
    <property type="term" value="P:lipopolysaccharide biosynthetic process"/>
    <property type="evidence" value="ECO:0007669"/>
    <property type="project" value="UniProtKB-KW"/>
</dbReference>
<dbReference type="GO" id="GO:0006493">
    <property type="term" value="P:protein O-linked glycosylation"/>
    <property type="evidence" value="ECO:0007669"/>
    <property type="project" value="InterPro"/>
</dbReference>
<dbReference type="GO" id="GO:0010041">
    <property type="term" value="P:response to iron(III) ion"/>
    <property type="evidence" value="ECO:0007669"/>
    <property type="project" value="TreeGrafter"/>
</dbReference>
<dbReference type="HAMAP" id="MF_01165">
    <property type="entry name" value="ArnT_transfer"/>
    <property type="match status" value="1"/>
</dbReference>
<dbReference type="InterPro" id="IPR022839">
    <property type="entry name" value="ArnT_tfrase"/>
</dbReference>
<dbReference type="InterPro" id="IPR003342">
    <property type="entry name" value="Glyco_trans_39/83"/>
</dbReference>
<dbReference type="InterPro" id="IPR050297">
    <property type="entry name" value="LipidA_mod_glycosyltrf_83"/>
</dbReference>
<dbReference type="NCBIfam" id="NF009784">
    <property type="entry name" value="PRK13279.1"/>
    <property type="match status" value="1"/>
</dbReference>
<dbReference type="PANTHER" id="PTHR33908">
    <property type="entry name" value="MANNOSYLTRANSFERASE YKCB-RELATED"/>
    <property type="match status" value="1"/>
</dbReference>
<dbReference type="PANTHER" id="PTHR33908:SF3">
    <property type="entry name" value="UNDECAPRENYL PHOSPHATE-ALPHA-4-AMINO-4-DEOXY-L-ARABINOSE ARABINOSYL TRANSFERASE"/>
    <property type="match status" value="1"/>
</dbReference>
<dbReference type="Pfam" id="PF02366">
    <property type="entry name" value="PMT"/>
    <property type="match status" value="1"/>
</dbReference>
<proteinExistence type="inferred from homology"/>
<organism>
    <name type="scientific">Pseudomonas fluorescens (strain ATCC BAA-477 / NRRL B-23932 / Pf-5)</name>
    <dbReference type="NCBI Taxonomy" id="220664"/>
    <lineage>
        <taxon>Bacteria</taxon>
        <taxon>Pseudomonadati</taxon>
        <taxon>Pseudomonadota</taxon>
        <taxon>Gammaproteobacteria</taxon>
        <taxon>Pseudomonadales</taxon>
        <taxon>Pseudomonadaceae</taxon>
        <taxon>Pseudomonas</taxon>
    </lineage>
</organism>
<name>ARNT2_PSEF5</name>
<sequence length="583" mass="65170">MTSRIQMHRTSPPPAYGTSAPPSGFTLGASTTSTLQRWALPLLLVAFGLFYLLPLTSHGLWIPDETRYAQISQEMLLSGDWVAPHFMGIRYFEKPIAGYWLIAIGQAVFGDNLFGVRIASALSTGLSVLLAYLITRRMWNDPRKSFAAALLYMSFGLIAGQAGYSNLDPQFTLWVNLSLVALWFALDGRSTRERLLAWAGLGVACGMGFMTKGFLAWLLPVLIALPYMIWQRRLGELVRYGLVAVLVAIGISLPWVLSIHAHEPDFWRFFFWHEHIRRFAADNAQHTRPWWFYLPLLVASSLPWAALLPGTFMQAWKDKRQAPTGFLLLWFLLPLAFFSLSRGKLPTYIMPCLLPLAVLMGSALIDRINAIQGRSIRINSLLNLLIGVAAMVALLYIQLTRPVYGHNEMLGLSLVFIMLMGWIIANLLPAARPLQYWPAPALGIWLLVALLPAGMPGFIVHNQMPDQFIKEHIEELRQTKTLLSNDLGAASALAWRLQRPEVTLYNTEGELKYGLAYADSAQRKVSMAEVGQWVSEARKQGSVGVVMRVKDVVESEEVALLPPGGKRYEEGNMLVLILPQSQP</sequence>
<gene>
    <name evidence="1" type="primary">arnT2</name>
    <name type="ordered locus">PFL_4461</name>
</gene>
<accession>Q4K884</accession>
<keyword id="KW-0997">Cell inner membrane</keyword>
<keyword id="KW-1003">Cell membrane</keyword>
<keyword id="KW-0328">Glycosyltransferase</keyword>
<keyword id="KW-0441">Lipid A biosynthesis</keyword>
<keyword id="KW-0444">Lipid biosynthesis</keyword>
<keyword id="KW-0443">Lipid metabolism</keyword>
<keyword id="KW-0448">Lipopolysaccharide biosynthesis</keyword>
<keyword id="KW-0472">Membrane</keyword>
<keyword id="KW-0808">Transferase</keyword>
<keyword id="KW-0812">Transmembrane</keyword>
<keyword id="KW-1133">Transmembrane helix</keyword>
<feature type="chain" id="PRO_0000380020" description="Undecaprenyl phosphate-alpha-4-amino-4-deoxy-L-arabinose arabinosyl transferase 2">
    <location>
        <begin position="1"/>
        <end position="583"/>
    </location>
</feature>
<feature type="transmembrane region" description="Helical" evidence="1">
    <location>
        <begin position="42"/>
        <end position="62"/>
    </location>
</feature>
<feature type="transmembrane region" description="Helical" evidence="1">
    <location>
        <begin position="113"/>
        <end position="135"/>
    </location>
</feature>
<feature type="transmembrane region" description="Helical" evidence="1">
    <location>
        <begin position="145"/>
        <end position="165"/>
    </location>
</feature>
<feature type="transmembrane region" description="Helical" evidence="1">
    <location>
        <begin position="166"/>
        <end position="186"/>
    </location>
</feature>
<feature type="transmembrane region" description="Helical" evidence="1">
    <location>
        <begin position="209"/>
        <end position="229"/>
    </location>
</feature>
<feature type="transmembrane region" description="Helical" evidence="1">
    <location>
        <begin position="241"/>
        <end position="261"/>
    </location>
</feature>
<feature type="transmembrane region" description="Helical" evidence="1">
    <location>
        <begin position="290"/>
        <end position="310"/>
    </location>
</feature>
<feature type="transmembrane region" description="Helical" evidence="1">
    <location>
        <begin position="321"/>
        <end position="341"/>
    </location>
</feature>
<feature type="transmembrane region" description="Helical" evidence="1">
    <location>
        <begin position="345"/>
        <end position="365"/>
    </location>
</feature>
<feature type="transmembrane region" description="Helical" evidence="1">
    <location>
        <begin position="380"/>
        <end position="400"/>
    </location>
</feature>
<feature type="transmembrane region" description="Helical" evidence="1">
    <location>
        <begin position="409"/>
        <end position="429"/>
    </location>
</feature>
<feature type="transmembrane region" description="Helical" evidence="1">
    <location>
        <begin position="440"/>
        <end position="460"/>
    </location>
</feature>
<feature type="region of interest" description="Disordered" evidence="2">
    <location>
        <begin position="1"/>
        <end position="20"/>
    </location>
</feature>
<comment type="function">
    <text evidence="1">Catalyzes the transfer of the L-Ara4N moiety of the glycolipid undecaprenyl phosphate-alpha-L-Ara4N to lipid A. The modified arabinose is attached to lipid A and is required for resistance to polymyxin and cationic antimicrobial peptides.</text>
</comment>
<comment type="catalytic activity">
    <reaction evidence="1">
        <text>4-amino-4-deoxy-alpha-L-arabinopyranosyl di-trans,octa-cis-undecaprenyl phosphate + lipid IVA = lipid IIA + di-trans,octa-cis-undecaprenyl phosphate.</text>
        <dbReference type="EC" id="2.4.2.43"/>
    </reaction>
</comment>
<comment type="pathway">
    <text evidence="1">Lipopolysaccharide metabolism; 4-amino-4-deoxy-beta-L-arabinose-lipid A biosynthesis.</text>
</comment>
<comment type="subcellular location">
    <subcellularLocation>
        <location evidence="1">Cell inner membrane</location>
        <topology evidence="1">Multi-pass membrane protein</topology>
    </subcellularLocation>
</comment>
<comment type="similarity">
    <text evidence="1">Belongs to the glycosyltransferase 83 family.</text>
</comment>
<protein>
    <recommendedName>
        <fullName evidence="1">Undecaprenyl phosphate-alpha-4-amino-4-deoxy-L-arabinose arabinosyl transferase 2</fullName>
        <ecNumber evidence="1">2.4.2.43</ecNumber>
    </recommendedName>
    <alternativeName>
        <fullName evidence="1">4-amino-4-deoxy-L-arabinose lipid A transferase 2</fullName>
    </alternativeName>
    <alternativeName>
        <fullName evidence="1">Lipid IV(A) 4-amino-4-deoxy-L-arabinosyltransferase</fullName>
    </alternativeName>
    <alternativeName>
        <fullName evidence="1">Undecaprenyl phosphate-alpha-L-Ara4N transferase 2</fullName>
    </alternativeName>
</protein>